<sequence>MPVNEEDLKTYRRDLHKIPELALAEFKTHRYLLEKIQSWQTNFMTIRQVEELPTAMLVKFSGTDPSRTVGYRADIDALPVTEDTGLPFESTHKGVMHACGHDVHMSLALGLVQYFSEHQPKDNLIVFFQPAEESKSGGKLAVDLGIFEGEWHPDEFYGIHDQPNLPAGTLSTLAGTLFAGTAELEIDIHGQGGHAAYPHLGKDPIVISAELIMLLQTVVSRDVDPIEGGVVSLGMISGGFTNNVIPDTVHLAGTVRSMTKDGLDKMTTRIRQIVEGVALANDVKINVRLETGSYLPVENNPDLANNLLSFMEQRQDIAFEEAKPAMTGEDFGYILQHIPGVMLWLGVNDNHSLHSAKLNIDEAALLPGFNALKDFIEWRMSQGE</sequence>
<feature type="chain" id="PRO_0000376770" description="N-acetyldiaminopimelate deacetylase">
    <location>
        <begin position="1"/>
        <end position="384"/>
    </location>
</feature>
<feature type="active site" evidence="1">
    <location>
        <position position="74"/>
    </location>
</feature>
<feature type="active site" description="Proton acceptor" evidence="1">
    <location>
        <position position="133"/>
    </location>
</feature>
<dbReference type="EC" id="3.5.1.47" evidence="1"/>
<dbReference type="EMBL" id="CP000414">
    <property type="protein sequence ID" value="ABJ61779.1"/>
    <property type="molecule type" value="Genomic_DNA"/>
</dbReference>
<dbReference type="RefSeq" id="WP_011679471.1">
    <property type="nucleotide sequence ID" value="NC_008531.1"/>
</dbReference>
<dbReference type="SMR" id="Q03YE3"/>
<dbReference type="EnsemblBacteria" id="ABJ61779">
    <property type="protein sequence ID" value="ABJ61779"/>
    <property type="gene ID" value="LEUM_0669"/>
</dbReference>
<dbReference type="GeneID" id="29576639"/>
<dbReference type="KEGG" id="lme:LEUM_0669"/>
<dbReference type="eggNOG" id="COG1473">
    <property type="taxonomic scope" value="Bacteria"/>
</dbReference>
<dbReference type="HOGENOM" id="CLU_023257_0_1_9"/>
<dbReference type="UniPathway" id="UPA00034">
    <property type="reaction ID" value="UER00024"/>
</dbReference>
<dbReference type="Proteomes" id="UP000000362">
    <property type="component" value="Chromosome"/>
</dbReference>
<dbReference type="GO" id="GO:0050118">
    <property type="term" value="F:N-acetyldiaminopimelate deacetylase activity"/>
    <property type="evidence" value="ECO:0007669"/>
    <property type="project" value="UniProtKB-UniRule"/>
</dbReference>
<dbReference type="GO" id="GO:0019877">
    <property type="term" value="P:diaminopimelate biosynthetic process"/>
    <property type="evidence" value="ECO:0007669"/>
    <property type="project" value="UniProtKB-UniRule"/>
</dbReference>
<dbReference type="GO" id="GO:0009089">
    <property type="term" value="P:lysine biosynthetic process via diaminopimelate"/>
    <property type="evidence" value="ECO:0007669"/>
    <property type="project" value="UniProtKB-UniRule"/>
</dbReference>
<dbReference type="CDD" id="cd05670">
    <property type="entry name" value="M20_Acy1_YkuR-like"/>
    <property type="match status" value="1"/>
</dbReference>
<dbReference type="FunFam" id="3.30.70.360:FF:000001">
    <property type="entry name" value="N-acetyldiaminopimelate deacetylase"/>
    <property type="match status" value="1"/>
</dbReference>
<dbReference type="Gene3D" id="3.30.70.360">
    <property type="match status" value="1"/>
</dbReference>
<dbReference type="Gene3D" id="3.40.630.10">
    <property type="entry name" value="Zn peptidases"/>
    <property type="match status" value="1"/>
</dbReference>
<dbReference type="HAMAP" id="MF_01692">
    <property type="entry name" value="DapEL"/>
    <property type="match status" value="1"/>
</dbReference>
<dbReference type="InterPro" id="IPR023905">
    <property type="entry name" value="AcetylDAP_deacetylase"/>
</dbReference>
<dbReference type="InterPro" id="IPR017439">
    <property type="entry name" value="Amidohydrolase"/>
</dbReference>
<dbReference type="InterPro" id="IPR036264">
    <property type="entry name" value="Bact_exopeptidase_dim_dom"/>
</dbReference>
<dbReference type="InterPro" id="IPR002933">
    <property type="entry name" value="Peptidase_M20"/>
</dbReference>
<dbReference type="InterPro" id="IPR011650">
    <property type="entry name" value="Peptidase_M20_dimer"/>
</dbReference>
<dbReference type="NCBIfam" id="TIGR01891">
    <property type="entry name" value="amidohydrolases"/>
    <property type="match status" value="1"/>
</dbReference>
<dbReference type="PANTHER" id="PTHR11014:SF98">
    <property type="entry name" value="N-ACETYLDIAMINOPIMELATE DEACETYLASE"/>
    <property type="match status" value="1"/>
</dbReference>
<dbReference type="PANTHER" id="PTHR11014">
    <property type="entry name" value="PEPTIDASE M20 FAMILY MEMBER"/>
    <property type="match status" value="1"/>
</dbReference>
<dbReference type="Pfam" id="PF07687">
    <property type="entry name" value="M20_dimer"/>
    <property type="match status" value="1"/>
</dbReference>
<dbReference type="Pfam" id="PF01546">
    <property type="entry name" value="Peptidase_M20"/>
    <property type="match status" value="1"/>
</dbReference>
<dbReference type="PIRSF" id="PIRSF005962">
    <property type="entry name" value="Pept_M20D_amidohydro"/>
    <property type="match status" value="1"/>
</dbReference>
<dbReference type="SUPFAM" id="SSF55031">
    <property type="entry name" value="Bacterial exopeptidase dimerisation domain"/>
    <property type="match status" value="1"/>
</dbReference>
<dbReference type="SUPFAM" id="SSF53187">
    <property type="entry name" value="Zn-dependent exopeptidases"/>
    <property type="match status" value="1"/>
</dbReference>
<organism>
    <name type="scientific">Leuconostoc mesenteroides subsp. mesenteroides (strain ATCC 8293 / DSM 20343 / BCRC 11652 / CCM 1803 / JCM 6124 / NCDO 523 / NBRC 100496 / NCIMB 8023 / NCTC 12954 / NRRL B-1118 / 37Y)</name>
    <dbReference type="NCBI Taxonomy" id="203120"/>
    <lineage>
        <taxon>Bacteria</taxon>
        <taxon>Bacillati</taxon>
        <taxon>Bacillota</taxon>
        <taxon>Bacilli</taxon>
        <taxon>Lactobacillales</taxon>
        <taxon>Lactobacillaceae</taxon>
        <taxon>Leuconostoc</taxon>
    </lineage>
</organism>
<reference key="1">
    <citation type="journal article" date="2006" name="Proc. Natl. Acad. Sci. U.S.A.">
        <title>Comparative genomics of the lactic acid bacteria.</title>
        <authorList>
            <person name="Makarova K.S."/>
            <person name="Slesarev A."/>
            <person name="Wolf Y.I."/>
            <person name="Sorokin A."/>
            <person name="Mirkin B."/>
            <person name="Koonin E.V."/>
            <person name="Pavlov A."/>
            <person name="Pavlova N."/>
            <person name="Karamychev V."/>
            <person name="Polouchine N."/>
            <person name="Shakhova V."/>
            <person name="Grigoriev I."/>
            <person name="Lou Y."/>
            <person name="Rohksar D."/>
            <person name="Lucas S."/>
            <person name="Huang K."/>
            <person name="Goodstein D.M."/>
            <person name="Hawkins T."/>
            <person name="Plengvidhya V."/>
            <person name="Welker D."/>
            <person name="Hughes J."/>
            <person name="Goh Y."/>
            <person name="Benson A."/>
            <person name="Baldwin K."/>
            <person name="Lee J.-H."/>
            <person name="Diaz-Muniz I."/>
            <person name="Dosti B."/>
            <person name="Smeianov V."/>
            <person name="Wechter W."/>
            <person name="Barabote R."/>
            <person name="Lorca G."/>
            <person name="Altermann E."/>
            <person name="Barrangou R."/>
            <person name="Ganesan B."/>
            <person name="Xie Y."/>
            <person name="Rawsthorne H."/>
            <person name="Tamir D."/>
            <person name="Parker C."/>
            <person name="Breidt F."/>
            <person name="Broadbent J.R."/>
            <person name="Hutkins R."/>
            <person name="O'Sullivan D."/>
            <person name="Steele J."/>
            <person name="Unlu G."/>
            <person name="Saier M.H. Jr."/>
            <person name="Klaenhammer T."/>
            <person name="Richardson P."/>
            <person name="Kozyavkin S."/>
            <person name="Weimer B.C."/>
            <person name="Mills D.A."/>
        </authorList>
    </citation>
    <scope>NUCLEOTIDE SEQUENCE [LARGE SCALE GENOMIC DNA]</scope>
    <source>
        <strain>ATCC 8293 / DSM 20343 / BCRC 11652 / CCM 1803 / JCM 6124 / NCDO 523 / NBRC 100496 / NCIMB 8023 / NCTC 12954 / NRRL B-1118 / 37Y</strain>
    </source>
</reference>
<gene>
    <name type="ordered locus">LEUM_0669</name>
</gene>
<comment type="function">
    <text evidence="1">Catalyzes the conversion of N-acetyl-diaminopimelate to diaminopimelate and acetate.</text>
</comment>
<comment type="catalytic activity">
    <reaction evidence="1">
        <text>N-acetyl-(2S,6S)-2,6-diaminopimelate + H2O = (2S,6S)-2,6-diaminopimelate + acetate</text>
        <dbReference type="Rhea" id="RHEA:20405"/>
        <dbReference type="ChEBI" id="CHEBI:15377"/>
        <dbReference type="ChEBI" id="CHEBI:30089"/>
        <dbReference type="ChEBI" id="CHEBI:57609"/>
        <dbReference type="ChEBI" id="CHEBI:58767"/>
        <dbReference type="EC" id="3.5.1.47"/>
    </reaction>
</comment>
<comment type="pathway">
    <text evidence="1">Amino-acid biosynthesis; L-lysine biosynthesis via DAP pathway; LL-2,6-diaminopimelate from (S)-tetrahydrodipicolinate (acetylase route): step 3/3.</text>
</comment>
<comment type="similarity">
    <text evidence="1">Belongs to the peptidase M20A family. N-acetyldiaminopimelate deacetylase subfamily.</text>
</comment>
<accession>Q03YE3</accession>
<name>DAPEL_LEUMM</name>
<keyword id="KW-0028">Amino-acid biosynthesis</keyword>
<keyword id="KW-0220">Diaminopimelate biosynthesis</keyword>
<keyword id="KW-0378">Hydrolase</keyword>
<keyword id="KW-0457">Lysine biosynthesis</keyword>
<keyword id="KW-1185">Reference proteome</keyword>
<evidence type="ECO:0000255" key="1">
    <source>
        <dbReference type="HAMAP-Rule" id="MF_01692"/>
    </source>
</evidence>
<protein>
    <recommendedName>
        <fullName evidence="1">N-acetyldiaminopimelate deacetylase</fullName>
        <ecNumber evidence="1">3.5.1.47</ecNumber>
    </recommendedName>
</protein>
<proteinExistence type="inferred from homology"/>